<sequence length="337" mass="37532">MTEIRNNWTKEEISAIYNSPILDLMYRGATVHREFHDPQEVQVCTLLSIKTGGCPEDCSYCPQAARYHTDVKVEKLMDVKDVLNSALEAKESGSTRFCMGAAWREVRDNKDFDKVIDMVKGVSTMGMEVCCTLGMLTPEQADKLKDAGLYAYNHNLDTSAEHYDKVITTRTYDDRLETLDNVRNAKISVCSGGIIGMGESHGDRVGMLHTLANMVEHPESVPVNALVPVEGTPLEDQPRVSVWEMVRMIATARIIMPKAMVRLSAGRVRMNTEEQALCFLAGANSIFAGDKLLTTPNPEVNADKEMFQVLNLKPRQSFKNGDAPKIKFEQIPSALVK</sequence>
<name>BIOB_CYTH3</name>
<proteinExistence type="inferred from homology"/>
<keyword id="KW-0001">2Fe-2S</keyword>
<keyword id="KW-0004">4Fe-4S</keyword>
<keyword id="KW-0093">Biotin biosynthesis</keyword>
<keyword id="KW-0408">Iron</keyword>
<keyword id="KW-0411">Iron-sulfur</keyword>
<keyword id="KW-0479">Metal-binding</keyword>
<keyword id="KW-1185">Reference proteome</keyword>
<keyword id="KW-0949">S-adenosyl-L-methionine</keyword>
<keyword id="KW-0808">Transferase</keyword>
<evidence type="ECO:0000255" key="1">
    <source>
        <dbReference type="HAMAP-Rule" id="MF_01694"/>
    </source>
</evidence>
<evidence type="ECO:0000255" key="2">
    <source>
        <dbReference type="PROSITE-ProRule" id="PRU01266"/>
    </source>
</evidence>
<feature type="chain" id="PRO_0000381341" description="Biotin synthase">
    <location>
        <begin position="1"/>
        <end position="337"/>
    </location>
</feature>
<feature type="domain" description="Radical SAM core" evidence="2">
    <location>
        <begin position="39"/>
        <end position="267"/>
    </location>
</feature>
<feature type="binding site" evidence="1">
    <location>
        <position position="54"/>
    </location>
    <ligand>
        <name>[4Fe-4S] cluster</name>
        <dbReference type="ChEBI" id="CHEBI:49883"/>
        <note>4Fe-4S-S-AdoMet</note>
    </ligand>
</feature>
<feature type="binding site" evidence="1">
    <location>
        <position position="58"/>
    </location>
    <ligand>
        <name>[4Fe-4S] cluster</name>
        <dbReference type="ChEBI" id="CHEBI:49883"/>
        <note>4Fe-4S-S-AdoMet</note>
    </ligand>
</feature>
<feature type="binding site" evidence="1">
    <location>
        <position position="61"/>
    </location>
    <ligand>
        <name>[4Fe-4S] cluster</name>
        <dbReference type="ChEBI" id="CHEBI:49883"/>
        <note>4Fe-4S-S-AdoMet</note>
    </ligand>
</feature>
<feature type="binding site" evidence="1">
    <location>
        <position position="98"/>
    </location>
    <ligand>
        <name>[2Fe-2S] cluster</name>
        <dbReference type="ChEBI" id="CHEBI:190135"/>
    </ligand>
</feature>
<feature type="binding site" evidence="1">
    <location>
        <position position="130"/>
    </location>
    <ligand>
        <name>[2Fe-2S] cluster</name>
        <dbReference type="ChEBI" id="CHEBI:190135"/>
    </ligand>
</feature>
<feature type="binding site" evidence="1">
    <location>
        <position position="190"/>
    </location>
    <ligand>
        <name>[2Fe-2S] cluster</name>
        <dbReference type="ChEBI" id="CHEBI:190135"/>
    </ligand>
</feature>
<feature type="binding site" evidence="1">
    <location>
        <position position="262"/>
    </location>
    <ligand>
        <name>[2Fe-2S] cluster</name>
        <dbReference type="ChEBI" id="CHEBI:190135"/>
    </ligand>
</feature>
<gene>
    <name evidence="1" type="primary">bioB</name>
    <name type="ordered locus">CHU_2466</name>
</gene>
<organism>
    <name type="scientific">Cytophaga hutchinsonii (strain ATCC 33406 / DSM 1761 / CIP 103989 / NBRC 15051 / NCIMB 9469 / D465)</name>
    <dbReference type="NCBI Taxonomy" id="269798"/>
    <lineage>
        <taxon>Bacteria</taxon>
        <taxon>Pseudomonadati</taxon>
        <taxon>Bacteroidota</taxon>
        <taxon>Cytophagia</taxon>
        <taxon>Cytophagales</taxon>
        <taxon>Cytophagaceae</taxon>
        <taxon>Cytophaga</taxon>
    </lineage>
</organism>
<dbReference type="EC" id="2.8.1.6" evidence="1"/>
<dbReference type="EMBL" id="CP000383">
    <property type="protein sequence ID" value="ABG59720.1"/>
    <property type="molecule type" value="Genomic_DNA"/>
</dbReference>
<dbReference type="RefSeq" id="WP_011585834.1">
    <property type="nucleotide sequence ID" value="NC_008255.1"/>
</dbReference>
<dbReference type="SMR" id="Q11S94"/>
<dbReference type="STRING" id="269798.CHU_2466"/>
<dbReference type="KEGG" id="chu:CHU_2466"/>
<dbReference type="eggNOG" id="COG0502">
    <property type="taxonomic scope" value="Bacteria"/>
</dbReference>
<dbReference type="HOGENOM" id="CLU_033172_1_2_10"/>
<dbReference type="OrthoDB" id="9786826at2"/>
<dbReference type="UniPathway" id="UPA00078">
    <property type="reaction ID" value="UER00162"/>
</dbReference>
<dbReference type="Proteomes" id="UP000001822">
    <property type="component" value="Chromosome"/>
</dbReference>
<dbReference type="GO" id="GO:0051537">
    <property type="term" value="F:2 iron, 2 sulfur cluster binding"/>
    <property type="evidence" value="ECO:0007669"/>
    <property type="project" value="UniProtKB-KW"/>
</dbReference>
<dbReference type="GO" id="GO:0051539">
    <property type="term" value="F:4 iron, 4 sulfur cluster binding"/>
    <property type="evidence" value="ECO:0007669"/>
    <property type="project" value="UniProtKB-KW"/>
</dbReference>
<dbReference type="GO" id="GO:0004076">
    <property type="term" value="F:biotin synthase activity"/>
    <property type="evidence" value="ECO:0007669"/>
    <property type="project" value="UniProtKB-UniRule"/>
</dbReference>
<dbReference type="GO" id="GO:0005506">
    <property type="term" value="F:iron ion binding"/>
    <property type="evidence" value="ECO:0007669"/>
    <property type="project" value="UniProtKB-UniRule"/>
</dbReference>
<dbReference type="GO" id="GO:0009102">
    <property type="term" value="P:biotin biosynthetic process"/>
    <property type="evidence" value="ECO:0007669"/>
    <property type="project" value="UniProtKB-UniRule"/>
</dbReference>
<dbReference type="CDD" id="cd01335">
    <property type="entry name" value="Radical_SAM"/>
    <property type="match status" value="1"/>
</dbReference>
<dbReference type="FunFam" id="3.20.20.70:FF:000011">
    <property type="entry name" value="Biotin synthase"/>
    <property type="match status" value="1"/>
</dbReference>
<dbReference type="Gene3D" id="3.20.20.70">
    <property type="entry name" value="Aldolase class I"/>
    <property type="match status" value="1"/>
</dbReference>
<dbReference type="HAMAP" id="MF_01694">
    <property type="entry name" value="BioB"/>
    <property type="match status" value="1"/>
</dbReference>
<dbReference type="InterPro" id="IPR013785">
    <property type="entry name" value="Aldolase_TIM"/>
</dbReference>
<dbReference type="InterPro" id="IPR010722">
    <property type="entry name" value="BATS_dom"/>
</dbReference>
<dbReference type="InterPro" id="IPR002684">
    <property type="entry name" value="Biotin_synth/BioAB"/>
</dbReference>
<dbReference type="InterPro" id="IPR024177">
    <property type="entry name" value="Biotin_synthase"/>
</dbReference>
<dbReference type="InterPro" id="IPR006638">
    <property type="entry name" value="Elp3/MiaA/NifB-like_rSAM"/>
</dbReference>
<dbReference type="InterPro" id="IPR007197">
    <property type="entry name" value="rSAM"/>
</dbReference>
<dbReference type="NCBIfam" id="TIGR00433">
    <property type="entry name" value="bioB"/>
    <property type="match status" value="1"/>
</dbReference>
<dbReference type="PANTHER" id="PTHR22976">
    <property type="entry name" value="BIOTIN SYNTHASE"/>
    <property type="match status" value="1"/>
</dbReference>
<dbReference type="PANTHER" id="PTHR22976:SF2">
    <property type="entry name" value="BIOTIN SYNTHASE, MITOCHONDRIAL"/>
    <property type="match status" value="1"/>
</dbReference>
<dbReference type="Pfam" id="PF06968">
    <property type="entry name" value="BATS"/>
    <property type="match status" value="1"/>
</dbReference>
<dbReference type="Pfam" id="PF04055">
    <property type="entry name" value="Radical_SAM"/>
    <property type="match status" value="1"/>
</dbReference>
<dbReference type="PIRSF" id="PIRSF001619">
    <property type="entry name" value="Biotin_synth"/>
    <property type="match status" value="1"/>
</dbReference>
<dbReference type="SFLD" id="SFLDG01060">
    <property type="entry name" value="BATS_domain_containing"/>
    <property type="match status" value="1"/>
</dbReference>
<dbReference type="SFLD" id="SFLDF00272">
    <property type="entry name" value="biotin_synthase"/>
    <property type="match status" value="1"/>
</dbReference>
<dbReference type="SMART" id="SM00876">
    <property type="entry name" value="BATS"/>
    <property type="match status" value="1"/>
</dbReference>
<dbReference type="SMART" id="SM00729">
    <property type="entry name" value="Elp3"/>
    <property type="match status" value="1"/>
</dbReference>
<dbReference type="SUPFAM" id="SSF102114">
    <property type="entry name" value="Radical SAM enzymes"/>
    <property type="match status" value="1"/>
</dbReference>
<dbReference type="PROSITE" id="PS51918">
    <property type="entry name" value="RADICAL_SAM"/>
    <property type="match status" value="1"/>
</dbReference>
<accession>Q11S94</accession>
<protein>
    <recommendedName>
        <fullName evidence="1">Biotin synthase</fullName>
        <ecNumber evidence="1">2.8.1.6</ecNumber>
    </recommendedName>
</protein>
<comment type="function">
    <text evidence="1">Catalyzes the conversion of dethiobiotin (DTB) to biotin by the insertion of a sulfur atom into dethiobiotin via a radical-based mechanism.</text>
</comment>
<comment type="catalytic activity">
    <reaction evidence="1">
        <text>(4R,5S)-dethiobiotin + (sulfur carrier)-SH + 2 reduced [2Fe-2S]-[ferredoxin] + 2 S-adenosyl-L-methionine = (sulfur carrier)-H + biotin + 2 5'-deoxyadenosine + 2 L-methionine + 2 oxidized [2Fe-2S]-[ferredoxin]</text>
        <dbReference type="Rhea" id="RHEA:22060"/>
        <dbReference type="Rhea" id="RHEA-COMP:10000"/>
        <dbReference type="Rhea" id="RHEA-COMP:10001"/>
        <dbReference type="Rhea" id="RHEA-COMP:14737"/>
        <dbReference type="Rhea" id="RHEA-COMP:14739"/>
        <dbReference type="ChEBI" id="CHEBI:17319"/>
        <dbReference type="ChEBI" id="CHEBI:29917"/>
        <dbReference type="ChEBI" id="CHEBI:33737"/>
        <dbReference type="ChEBI" id="CHEBI:33738"/>
        <dbReference type="ChEBI" id="CHEBI:57586"/>
        <dbReference type="ChEBI" id="CHEBI:57844"/>
        <dbReference type="ChEBI" id="CHEBI:59789"/>
        <dbReference type="ChEBI" id="CHEBI:64428"/>
        <dbReference type="ChEBI" id="CHEBI:149473"/>
        <dbReference type="EC" id="2.8.1.6"/>
    </reaction>
</comment>
<comment type="cofactor">
    <cofactor evidence="1">
        <name>[4Fe-4S] cluster</name>
        <dbReference type="ChEBI" id="CHEBI:49883"/>
    </cofactor>
    <text evidence="1">Binds 1 [4Fe-4S] cluster. The cluster is coordinated with 3 cysteines and an exchangeable S-adenosyl-L-methionine.</text>
</comment>
<comment type="cofactor">
    <cofactor evidence="1">
        <name>[2Fe-2S] cluster</name>
        <dbReference type="ChEBI" id="CHEBI:190135"/>
    </cofactor>
    <text evidence="1">Binds 1 [2Fe-2S] cluster. The cluster is coordinated with 3 cysteines and 1 arginine.</text>
</comment>
<comment type="pathway">
    <text evidence="1">Cofactor biosynthesis; biotin biosynthesis; biotin from 7,8-diaminononanoate: step 2/2.</text>
</comment>
<comment type="subunit">
    <text evidence="1">Homodimer.</text>
</comment>
<comment type="similarity">
    <text evidence="1">Belongs to the radical SAM superfamily. Biotin synthase family.</text>
</comment>
<reference key="1">
    <citation type="journal article" date="2007" name="Appl. Environ. Microbiol.">
        <title>Genome sequence of the cellulolytic gliding bacterium Cytophaga hutchinsonii.</title>
        <authorList>
            <person name="Xie G."/>
            <person name="Bruce D.C."/>
            <person name="Challacombe J.F."/>
            <person name="Chertkov O."/>
            <person name="Detter J.C."/>
            <person name="Gilna P."/>
            <person name="Han C.S."/>
            <person name="Lucas S."/>
            <person name="Misra M."/>
            <person name="Myers G.L."/>
            <person name="Richardson P."/>
            <person name="Tapia R."/>
            <person name="Thayer N."/>
            <person name="Thompson L.S."/>
            <person name="Brettin T.S."/>
            <person name="Henrissat B."/>
            <person name="Wilson D.B."/>
            <person name="McBride M.J."/>
        </authorList>
    </citation>
    <scope>NUCLEOTIDE SEQUENCE [LARGE SCALE GENOMIC DNA]</scope>
    <source>
        <strain>ATCC 33406 / DSM 1761 / JCM 20678 / CIP 103989 / IAM 12607 / NBRC 15051 / NCIMB 9469 / D465</strain>
    </source>
</reference>